<gene>
    <name evidence="8" type="primary">M1</name>
</gene>
<organism>
    <name type="scientific">Phoma sp. (strain ATCC 20986 / MF5453)</name>
    <dbReference type="NCBI Taxonomy" id="1828523"/>
    <lineage>
        <taxon>Eukaryota</taxon>
        <taxon>Fungi</taxon>
        <taxon>Dikarya</taxon>
        <taxon>Ascomycota</taxon>
        <taxon>Pezizomycotina</taxon>
        <taxon>Dothideomycetes</taxon>
        <taxon>Pleosporomycetidae</taxon>
        <taxon>Pleosporales</taxon>
        <taxon>Pleosporineae</taxon>
        <taxon>Didymellaceae</taxon>
        <taxon>Phoma</taxon>
    </lineage>
</organism>
<dbReference type="EC" id="1.-.-.-" evidence="10"/>
<dbReference type="EMBL" id="KU946987">
    <property type="protein sequence ID" value="AMY15058.1"/>
    <property type="molecule type" value="Genomic_DNA"/>
</dbReference>
<dbReference type="GlyCosmos" id="A0A3G1DJE8">
    <property type="glycosylation" value="1 site, No reported glycans"/>
</dbReference>
<dbReference type="GO" id="GO:0016020">
    <property type="term" value="C:membrane"/>
    <property type="evidence" value="ECO:0007669"/>
    <property type="project" value="UniProtKB-SubCell"/>
</dbReference>
<dbReference type="GO" id="GO:0016491">
    <property type="term" value="F:oxidoreductase activity"/>
    <property type="evidence" value="ECO:0007669"/>
    <property type="project" value="UniProtKB-KW"/>
</dbReference>
<sequence length="386" mass="43071">MLRMKKICTAFLTIALCTHVLAHDDTEMKDPNRVSQEQRERKVEYGTYTVPPRNQDNGMFRLKRDVDPPCTNCVITVMSANLEYSNGTTADAENGMWLHHILFYNKANRDDICGEKKPGQRFFGSGNDRTPLDLTDGGKNKLGYHIGHNDQFFISVELMNMHFSSQDVVLTAHWKFVEEPYSEYELGTPYWFDVASCGRSDVPATNNAIFNFISPPVRLDFHGQLAYLSNHVHDGAYLHEVKKNGKIICSVNPQYSSDDGADGIVHLSHVPPCSNAGPVAPGDEVSLTASYDTTKYAPMINEDGTLEPVMGVTLAYIVKGTAPVASDSGGRFYFVVPIAAIAFIALTIGAGYVFYSARQKKEWPKWLSRRQKYQSVGTEDEAFLAR</sequence>
<proteinExistence type="inferred from homology"/>
<name>MFM1_PHOSM</name>
<reference key="1">
    <citation type="journal article" date="2016" name="Chem. Commun. (Camb.)">
        <title>Identification of genes encoding squalestatin S1 biosynthesis and in vitro production of new squalestatin analogues.</title>
        <authorList>
            <person name="Bonsch B."/>
            <person name="Belt V."/>
            <person name="Bartel C."/>
            <person name="Duensing N."/>
            <person name="Koziol M."/>
            <person name="Lazarus C.M."/>
            <person name="Bailey A.M."/>
            <person name="Simpson T.J."/>
            <person name="Cox R.J."/>
        </authorList>
    </citation>
    <scope>NUCLEOTIDE SEQUENCE [GENOMIC DNA]</scope>
    <scope>FUNCTION</scope>
    <scope>PATHWAY</scope>
</reference>
<reference key="2">
    <citation type="journal article" date="2001" name="Chem. Biol.">
        <title>Design and utility of oligonucleotide gene probes for fungal polyketide synthases.</title>
        <authorList>
            <person name="Nicholson T.P."/>
            <person name="Rudd B.A."/>
            <person name="Dawson M."/>
            <person name="Lazarus C.M."/>
            <person name="Simpson T.J."/>
            <person name="Cox R.J."/>
        </authorList>
    </citation>
    <scope>FUNCTION</scope>
</reference>
<reference key="3">
    <citation type="journal article" date="2004" name="Chem. Commun. (Camb.)">
        <title>Rapid cloning and expression of a fungal polyketide synthase gene involved in squalestatin biosynthesis.</title>
        <authorList>
            <person name="Cox R.J."/>
            <person name="Glod F."/>
            <person name="Hurley D."/>
            <person name="Lazarus C.M."/>
            <person name="Nicholson T.P."/>
            <person name="Rudd B.A."/>
            <person name="Simpson T.J."/>
            <person name="Wilkinson B."/>
            <person name="Zhang Y."/>
        </authorList>
    </citation>
    <scope>FUNCTION</scope>
</reference>
<reference key="4">
    <citation type="journal article" date="2017" name="Chem. Commun. (Camb.)">
        <title>In vitro kinetic study of the squalestatin tetraketide synthase dehydratase reveals the stereochemical course of a fungal highly reducing polyketide synthase.</title>
        <authorList>
            <person name="Liddle E."/>
            <person name="Scott A."/>
            <person name="Han L.C."/>
            <person name="Ivison D."/>
            <person name="Simpson T.J."/>
            <person name="Willis C.L."/>
            <person name="Cox R.J."/>
        </authorList>
    </citation>
    <scope>FUNCTION</scope>
</reference>
<comment type="function">
    <text evidence="1 4 5 6 7 10">Probable copper-dependent oxygenase; part of the gene cluster that mediates the biosynthesis of squalestatin S1 (SQS1, also known as zaragozic acid A), a heavily oxidized fungal polyketide that offers potent cholesterol lowering activity by targeting squalene synthase (SS) (PubMed:27056201). SQS1 is composed of a 2,8-dioxobicyclic[3.2.1]octane-3,4,5-tricarboxyclic acid core that is connected to two lipophilic polyketide arms (PubMed:27056201). These initial steps feature the priming of an unusual benzoic acid starter unit onto the highly reducing polyketide synthase pks2, followed by oxaloacetate extension and product release to generate a tricarboxylic acid containing product (By similarity). The phenylalanine ammonia lyase (PAL) M7 and the acyl-CoA ligase M9 are involved in transforming phenylalanine into benzoyl-CoA (By similarity). The citrate synthase-like protein R3 is involved in connecting the C-alpha-carbons of the hexaketide chain and oxaloacetate to afford the tricarboxylic acid unit (By similarity). The potential hydrolytic enzymes, M8 and M10, are in close proximity to pks2 and may participate in product release (By similarity). On the other side, the tetraketide arm is synthesized by a the squalestatin tetraketide synthase pks1 and enzymatically esterified to the core in the last biosynthetic step, by the acetyltransferase M4 (PubMed:11251290, PubMed:15489970, PubMed:28106181). The biosynthesis of the tetraketide must involve 3 rounds of chain extension (PubMed:11251290, PubMed:15489970, PubMed:28106181). After the first and second rounds methyl-transfer occurs, and in all rounds of extension the ketoreductase and dehydratase are active (PubMed:11251290, PubMed:15489970, PubMed:28106181). The enoyl reductase and C-MeT of pks1 are not active in the final round of extension (PubMed:11251290, PubMed:15489970, PubMed:28106181). The acetyltransferase M4 appears to have a broad substrate selectivity for its acyl CoA substrate, allowing the in vitro synthesis of novel squalestatins (Probable). The biosynthesis of SQS1 requires several oxidative steps likely performed by oxidoreductases M1, R1 and R2 (Probable). Finally, in support of the identification of the cluster as being responsible for SQS1 production, the cluster contains a gene encoding a putative squalene synthase (SS) R6, suggesting a likely mechanism for self-resistance (Probable).</text>
</comment>
<comment type="pathway">
    <text evidence="10">Secondary metabolite biosynthesis.</text>
</comment>
<comment type="subcellular location">
    <subcellularLocation>
        <location evidence="2">Membrane</location>
        <topology evidence="2">Single-pass membrane protein</topology>
    </subcellularLocation>
</comment>
<comment type="similarity">
    <text evidence="9">Belongs to the clz3 oxygenase family.</text>
</comment>
<accession>A0A3G1DJE8</accession>
<protein>
    <recommendedName>
        <fullName evidence="8">Probable copper-dependent oxygenase M1</fullName>
        <ecNumber evidence="10">1.-.-.-</ecNumber>
    </recommendedName>
    <alternativeName>
        <fullName evidence="8">Squalestatin S1 biosynthesis cluster protein M1</fullName>
    </alternativeName>
</protein>
<keyword id="KW-0186">Copper</keyword>
<keyword id="KW-0325">Glycoprotein</keyword>
<keyword id="KW-0472">Membrane</keyword>
<keyword id="KW-0560">Oxidoreductase</keyword>
<keyword id="KW-0732">Signal</keyword>
<keyword id="KW-0812">Transmembrane</keyword>
<keyword id="KW-1133">Transmembrane helix</keyword>
<feature type="signal peptide" evidence="2">
    <location>
        <begin position="1"/>
        <end position="22"/>
    </location>
</feature>
<feature type="chain" id="PRO_5017924489" description="Probable copper-dependent oxygenase M1">
    <location>
        <begin position="23"/>
        <end position="386"/>
    </location>
</feature>
<feature type="transmembrane region" description="Helical" evidence="2">
    <location>
        <begin position="334"/>
        <end position="354"/>
    </location>
</feature>
<feature type="glycosylation site" description="N-linked (GlcNAc...) asparagine" evidence="3">
    <location>
        <position position="86"/>
    </location>
</feature>
<evidence type="ECO:0000250" key="1">
    <source>
        <dbReference type="UniProtKB" id="A0A345BJP1"/>
    </source>
</evidence>
<evidence type="ECO:0000255" key="2"/>
<evidence type="ECO:0000255" key="3">
    <source>
        <dbReference type="PROSITE-ProRule" id="PRU00498"/>
    </source>
</evidence>
<evidence type="ECO:0000269" key="4">
    <source>
    </source>
</evidence>
<evidence type="ECO:0000269" key="5">
    <source>
    </source>
</evidence>
<evidence type="ECO:0000269" key="6">
    <source>
    </source>
</evidence>
<evidence type="ECO:0000269" key="7">
    <source>
    </source>
</evidence>
<evidence type="ECO:0000303" key="8">
    <source>
    </source>
</evidence>
<evidence type="ECO:0000305" key="9"/>
<evidence type="ECO:0000305" key="10">
    <source>
    </source>
</evidence>